<comment type="function">
    <text evidence="1">The UvrABC repair system catalyzes the recognition and processing of DNA lesions. UvrC both incises the 5' and 3' sides of the lesion. The N-terminal half is responsible for the 3' incision and the C-terminal half is responsible for the 5' incision.</text>
</comment>
<comment type="subunit">
    <text evidence="1">Interacts with UvrB in an incision complex.</text>
</comment>
<comment type="subcellular location">
    <subcellularLocation>
        <location evidence="1">Cytoplasm</location>
    </subcellularLocation>
</comment>
<comment type="similarity">
    <text evidence="1">Belongs to the UvrC family.</text>
</comment>
<keyword id="KW-0963">Cytoplasm</keyword>
<keyword id="KW-0227">DNA damage</keyword>
<keyword id="KW-0228">DNA excision</keyword>
<keyword id="KW-0234">DNA repair</keyword>
<keyword id="KW-0267">Excision nuclease</keyword>
<keyword id="KW-1185">Reference proteome</keyword>
<keyword id="KW-0742">SOS response</keyword>
<feature type="chain" id="PRO_0000138317" description="UvrABC system protein C">
    <location>
        <begin position="1"/>
        <end position="597"/>
    </location>
</feature>
<feature type="domain" description="GIY-YIG" evidence="1">
    <location>
        <begin position="14"/>
        <end position="91"/>
    </location>
</feature>
<feature type="sequence conflict" description="In Ref. 2." evidence="2" ref="2">
    <original>HKDLAQLLNTDYIH</original>
    <variation>QQGFSTTSKYWLYP</variation>
    <location>
        <begin position="370"/>
        <end position="383"/>
    </location>
</feature>
<accession>P47448</accession>
<accession>Q49305</accession>
<name>UVRC_MYCGE</name>
<evidence type="ECO:0000255" key="1">
    <source>
        <dbReference type="HAMAP-Rule" id="MF_00203"/>
    </source>
</evidence>
<evidence type="ECO:0000305" key="2"/>
<gene>
    <name evidence="1" type="primary">uvrC</name>
    <name type="ordered locus">MG206</name>
</gene>
<dbReference type="EMBL" id="L43967">
    <property type="protein sequence ID" value="AAC71424.1"/>
    <property type="molecule type" value="Genomic_DNA"/>
</dbReference>
<dbReference type="EMBL" id="U02182">
    <property type="protein sequence ID" value="AAD12468.1"/>
    <property type="molecule type" value="Genomic_DNA"/>
</dbReference>
<dbReference type="PIR" id="T09715">
    <property type="entry name" value="T09715"/>
</dbReference>
<dbReference type="RefSeq" id="WP_010869373.1">
    <property type="nucleotide sequence ID" value="NC_000908.2"/>
</dbReference>
<dbReference type="SMR" id="P47448"/>
<dbReference type="FunCoup" id="P47448">
    <property type="interactions" value="112"/>
</dbReference>
<dbReference type="STRING" id="243273.MG_206"/>
<dbReference type="GeneID" id="88282338"/>
<dbReference type="KEGG" id="mge:MG_206"/>
<dbReference type="eggNOG" id="COG0322">
    <property type="taxonomic scope" value="Bacteria"/>
</dbReference>
<dbReference type="HOGENOM" id="CLU_014841_3_2_14"/>
<dbReference type="InParanoid" id="P47448"/>
<dbReference type="OrthoDB" id="9804933at2"/>
<dbReference type="BioCyc" id="MGEN243273:G1GJ2-239-MONOMER"/>
<dbReference type="Proteomes" id="UP000000807">
    <property type="component" value="Chromosome"/>
</dbReference>
<dbReference type="GO" id="GO:0005737">
    <property type="term" value="C:cytoplasm"/>
    <property type="evidence" value="ECO:0007669"/>
    <property type="project" value="UniProtKB-SubCell"/>
</dbReference>
<dbReference type="GO" id="GO:0009380">
    <property type="term" value="C:excinuclease repair complex"/>
    <property type="evidence" value="ECO:0000318"/>
    <property type="project" value="GO_Central"/>
</dbReference>
<dbReference type="GO" id="GO:0003677">
    <property type="term" value="F:DNA binding"/>
    <property type="evidence" value="ECO:0007669"/>
    <property type="project" value="UniProtKB-UniRule"/>
</dbReference>
<dbReference type="GO" id="GO:0009381">
    <property type="term" value="F:excinuclease ABC activity"/>
    <property type="evidence" value="ECO:0007669"/>
    <property type="project" value="UniProtKB-UniRule"/>
</dbReference>
<dbReference type="GO" id="GO:0006974">
    <property type="term" value="P:DNA damage response"/>
    <property type="evidence" value="ECO:0000318"/>
    <property type="project" value="GO_Central"/>
</dbReference>
<dbReference type="GO" id="GO:0006289">
    <property type="term" value="P:nucleotide-excision repair"/>
    <property type="evidence" value="ECO:0007669"/>
    <property type="project" value="UniProtKB-UniRule"/>
</dbReference>
<dbReference type="GO" id="GO:0009432">
    <property type="term" value="P:SOS response"/>
    <property type="evidence" value="ECO:0007669"/>
    <property type="project" value="UniProtKB-UniRule"/>
</dbReference>
<dbReference type="CDD" id="cd10434">
    <property type="entry name" value="GIY-YIG_UvrC_Cho"/>
    <property type="match status" value="1"/>
</dbReference>
<dbReference type="FunFam" id="3.40.1440.10:FF:000001">
    <property type="entry name" value="UvrABC system protein C"/>
    <property type="match status" value="1"/>
</dbReference>
<dbReference type="Gene3D" id="1.10.150.20">
    <property type="entry name" value="5' to 3' exonuclease, C-terminal subdomain"/>
    <property type="match status" value="1"/>
</dbReference>
<dbReference type="Gene3D" id="3.40.1440.10">
    <property type="entry name" value="GIY-YIG endonuclease"/>
    <property type="match status" value="1"/>
</dbReference>
<dbReference type="Gene3D" id="3.30.420.340">
    <property type="entry name" value="UvrC, RNAse H endonuclease domain"/>
    <property type="match status" value="1"/>
</dbReference>
<dbReference type="HAMAP" id="MF_00203">
    <property type="entry name" value="UvrC"/>
    <property type="match status" value="1"/>
</dbReference>
<dbReference type="InterPro" id="IPR041663">
    <property type="entry name" value="DisA/LigA_HHH"/>
</dbReference>
<dbReference type="InterPro" id="IPR000305">
    <property type="entry name" value="GIY-YIG_endonuc"/>
</dbReference>
<dbReference type="InterPro" id="IPR035901">
    <property type="entry name" value="GIY-YIG_endonuc_sf"/>
</dbReference>
<dbReference type="InterPro" id="IPR047296">
    <property type="entry name" value="GIY-YIG_UvrC_Cho"/>
</dbReference>
<dbReference type="InterPro" id="IPR010994">
    <property type="entry name" value="RuvA_2-like"/>
</dbReference>
<dbReference type="InterPro" id="IPR050066">
    <property type="entry name" value="UvrABC_protein_C"/>
</dbReference>
<dbReference type="InterPro" id="IPR004791">
    <property type="entry name" value="UvrC"/>
</dbReference>
<dbReference type="InterPro" id="IPR001162">
    <property type="entry name" value="UvrC_RNase_H_dom"/>
</dbReference>
<dbReference type="InterPro" id="IPR038476">
    <property type="entry name" value="UvrC_RNase_H_dom_sf"/>
</dbReference>
<dbReference type="NCBIfam" id="TIGR00194">
    <property type="entry name" value="uvrC"/>
    <property type="match status" value="1"/>
</dbReference>
<dbReference type="PANTHER" id="PTHR30562:SF1">
    <property type="entry name" value="UVRABC SYSTEM PROTEIN C"/>
    <property type="match status" value="1"/>
</dbReference>
<dbReference type="PANTHER" id="PTHR30562">
    <property type="entry name" value="UVRC/OXIDOREDUCTASE"/>
    <property type="match status" value="1"/>
</dbReference>
<dbReference type="Pfam" id="PF01541">
    <property type="entry name" value="GIY-YIG"/>
    <property type="match status" value="1"/>
</dbReference>
<dbReference type="Pfam" id="PF12826">
    <property type="entry name" value="HHH_2"/>
    <property type="match status" value="1"/>
</dbReference>
<dbReference type="Pfam" id="PF22920">
    <property type="entry name" value="UvrC_RNaseH"/>
    <property type="match status" value="1"/>
</dbReference>
<dbReference type="Pfam" id="PF08459">
    <property type="entry name" value="UvrC_RNaseH_dom"/>
    <property type="match status" value="1"/>
</dbReference>
<dbReference type="SMART" id="SM00465">
    <property type="entry name" value="GIYc"/>
    <property type="match status" value="1"/>
</dbReference>
<dbReference type="SUPFAM" id="SSF82771">
    <property type="entry name" value="GIY-YIG endonuclease"/>
    <property type="match status" value="1"/>
</dbReference>
<dbReference type="SUPFAM" id="SSF47781">
    <property type="entry name" value="RuvA domain 2-like"/>
    <property type="match status" value="1"/>
</dbReference>
<dbReference type="PROSITE" id="PS50164">
    <property type="entry name" value="GIY_YIG"/>
    <property type="match status" value="1"/>
</dbReference>
<dbReference type="PROSITE" id="PS50165">
    <property type="entry name" value="UVRC"/>
    <property type="match status" value="1"/>
</dbReference>
<reference key="1">
    <citation type="journal article" date="1995" name="Science">
        <title>The minimal gene complement of Mycoplasma genitalium.</title>
        <authorList>
            <person name="Fraser C.M."/>
            <person name="Gocayne J.D."/>
            <person name="White O."/>
            <person name="Adams M.D."/>
            <person name="Clayton R.A."/>
            <person name="Fleischmann R.D."/>
            <person name="Bult C.J."/>
            <person name="Kerlavage A.R."/>
            <person name="Sutton G.G."/>
            <person name="Kelley J.M."/>
            <person name="Fritchman J.L."/>
            <person name="Weidman J.F."/>
            <person name="Small K.V."/>
            <person name="Sandusky M."/>
            <person name="Fuhrmann J.L."/>
            <person name="Nguyen D.T."/>
            <person name="Utterback T.R."/>
            <person name="Saudek D.M."/>
            <person name="Phillips C.A."/>
            <person name="Merrick J.M."/>
            <person name="Tomb J.-F."/>
            <person name="Dougherty B.A."/>
            <person name="Bott K.F."/>
            <person name="Hu P.-C."/>
            <person name="Lucier T.S."/>
            <person name="Peterson S.N."/>
            <person name="Smith H.O."/>
            <person name="Hutchison C.A. III"/>
            <person name="Venter J.C."/>
        </authorList>
    </citation>
    <scope>NUCLEOTIDE SEQUENCE [LARGE SCALE GENOMIC DNA]</scope>
    <source>
        <strain>ATCC 33530 / DSM 19775 / NCTC 10195 / G37</strain>
    </source>
</reference>
<reference key="2">
    <citation type="journal article" date="1993" name="J. Bacteriol.">
        <title>A survey of the Mycoplasma genitalium genome by using random sequencing.</title>
        <authorList>
            <person name="Peterson S.N."/>
            <person name="Hu P.-C."/>
            <person name="Bott K.F."/>
            <person name="Hutchison C.A. III"/>
        </authorList>
    </citation>
    <scope>NUCLEOTIDE SEQUENCE [GENOMIC DNA] OF 299-383</scope>
    <source>
        <strain>ATCC 33530 / DSM 19775 / NCTC 10195 / G37</strain>
    </source>
</reference>
<protein>
    <recommendedName>
        <fullName evidence="1">UvrABC system protein C</fullName>
        <shortName evidence="1">Protein UvrC</shortName>
    </recommendedName>
    <alternativeName>
        <fullName evidence="1">Excinuclease ABC subunit C</fullName>
    </alternativeName>
</protein>
<organism>
    <name type="scientific">Mycoplasma genitalium (strain ATCC 33530 / DSM 19775 / NCTC 10195 / G37)</name>
    <name type="common">Mycoplasmoides genitalium</name>
    <dbReference type="NCBI Taxonomy" id="243273"/>
    <lineage>
        <taxon>Bacteria</taxon>
        <taxon>Bacillati</taxon>
        <taxon>Mycoplasmatota</taxon>
        <taxon>Mycoplasmoidales</taxon>
        <taxon>Mycoplasmoidaceae</taxon>
        <taxon>Mycoplasmoides</taxon>
    </lineage>
</organism>
<proteinExistence type="inferred from homology"/>
<sequence>MTTNLKQKLKTAPKKPGCYLWKDSNGKVLYVGKASNIFNRVHQYFQKNNPYKTQLLSSQISDVDFFILKDENDALNLEAKLINQYQPRFNLVLKQNNGYLYFYITKAKKPTLELARKYQIKTTKCFGPFASSKFKLREIHDLLLKLFPLRKCAPHQKNHPCFYFQMGLCMGQCMQTDTKEKYQQVISNIEQFFNDPSVVINYLKAAEKKASDNQEFEKAQQFLTLQKAVLELTKTHHTTIIKQKSSHDFIGYVFQNNVLAITIFCYEKGELTDKEQAVFTLEQTDIVEVESAIITFIYHHYKTTPLPSKITVSLDETNLKLISDSLKIGVFKPKNGNEKLILQTVIDNAKHALATKWLKFTSNYDKTQLHKDLAQLLNTDYIHSLEIIDVSFYDQNHVVGCMLRFEDGKKIKHLSRRYNINSLKKGDTNHIALLVYRRILSAMQTKANLPFSDLLIIDGGKAQIKSVKQVFSLFSNVKPPIIIGLVKNKNHQTDHIMLSDFQVKKIAINSPLFHYLATIQTEVDGFAKRSAFNKLSNHQLQNPLLQIPGVGKITAQILFDNFQTLNNIKLASVNELSQFIKKPLAQKIKTYFAKQTD</sequence>